<comment type="function">
    <text evidence="2 4">Lipid transfer protein required for autophagosome completion and peroxisome degradation and peroxisome degradation (By similarity). Tethers the edge of the isolation membrane (IM) to the endoplasmic reticulum (ER) and mediates direct lipid transfer from ER to IM for IM expansion (By similarity). ATG2 binds to the ER exit site (ERES), which is the membrane source for autophagosome formation, using basic residues in its N-terminal region (NR) and to the expanding edge of the IM through its C-terminal region (By similarity). The latter binding is assisted by an ATG18-PtdIns3P interaction (By similarity). ATG2 then extracts phospholipids from the membrane source using its NR and transfers them to ATG9 to the IM through its predicted beta-sheet-rich structure for membrane expansion (By similarity). Autophagy is required for proper vegetative growth, asexual/sexual reproduction, and full virulence (PubMed:28894236). Autophagy is particularly involved in the biosynthesis of deoxynivalenol (DON), an important virulence determinant (PubMed:28894236).</text>
</comment>
<comment type="catalytic activity">
    <reaction evidence="1">
        <text>a 1,2-diacyl-sn-glycero-3-phosphocholine(in) = a 1,2-diacyl-sn-glycero-3-phosphocholine(out)</text>
        <dbReference type="Rhea" id="RHEA:38571"/>
        <dbReference type="ChEBI" id="CHEBI:57643"/>
    </reaction>
</comment>
<comment type="catalytic activity">
    <reaction evidence="1">
        <text>a 1,2-diacyl-sn-glycero-3-phospho-L-serine(in) = a 1,2-diacyl-sn-glycero-3-phospho-L-serine(out)</text>
        <dbReference type="Rhea" id="RHEA:38663"/>
        <dbReference type="ChEBI" id="CHEBI:57262"/>
    </reaction>
</comment>
<comment type="catalytic activity">
    <reaction evidence="1">
        <text>a 1,2-diacyl-sn-glycero-3-phosphoethanolamine(in) = a 1,2-diacyl-sn-glycero-3-phosphoethanolamine(out)</text>
        <dbReference type="Rhea" id="RHEA:38895"/>
        <dbReference type="ChEBI" id="CHEBI:64612"/>
    </reaction>
</comment>
<comment type="subunit">
    <text evidence="2">Interacts with ATG18 (By similarity).</text>
</comment>
<comment type="subcellular location">
    <subcellularLocation>
        <location evidence="2">Preautophagosomal structure membrane</location>
        <topology evidence="2">Peripheral membrane protein</topology>
    </subcellularLocation>
    <subcellularLocation>
        <location evidence="2">Endoplasmic reticulum membrane</location>
        <topology evidence="2">Peripheral membrane protein</topology>
    </subcellularLocation>
</comment>
<comment type="disruption phenotype">
    <text evidence="4">Does not significantly decrease the growth rate under nutrient-rich conditions (PubMed:28894236). Causes only mild infection in point-inoculated spikelets of flowering wheat heads and impairs the spreading to nearby spikelets (PubMed:28894236). Reduces strongly the production of deoxynivalenol (DON), an important virulence determinant (PubMed:28894236).</text>
</comment>
<comment type="similarity">
    <text evidence="6">Belongs to the ATG2 family.</text>
</comment>
<comment type="sequence caution" evidence="6">
    <conflict type="erroneous gene model prediction">
        <sequence resource="EMBL-CDS" id="SCB64594"/>
    </conflict>
</comment>
<reference key="1">
    <citation type="journal article" date="2007" name="Science">
        <title>The Fusarium graminearum genome reveals a link between localized polymorphism and pathogen specialization.</title>
        <authorList>
            <person name="Cuomo C.A."/>
            <person name="Gueldener U."/>
            <person name="Xu J.-R."/>
            <person name="Trail F."/>
            <person name="Turgeon B.G."/>
            <person name="Di Pietro A."/>
            <person name="Walton J.D."/>
            <person name="Ma L.-J."/>
            <person name="Baker S.E."/>
            <person name="Rep M."/>
            <person name="Adam G."/>
            <person name="Antoniw J."/>
            <person name="Baldwin T."/>
            <person name="Calvo S.E."/>
            <person name="Chang Y.-L."/>
            <person name="DeCaprio D."/>
            <person name="Gale L.R."/>
            <person name="Gnerre S."/>
            <person name="Goswami R.S."/>
            <person name="Hammond-Kosack K."/>
            <person name="Harris L.J."/>
            <person name="Hilburn K."/>
            <person name="Kennell J.C."/>
            <person name="Kroken S."/>
            <person name="Magnuson J.K."/>
            <person name="Mannhaupt G."/>
            <person name="Mauceli E.W."/>
            <person name="Mewes H.-W."/>
            <person name="Mitterbauer R."/>
            <person name="Muehlbauer G."/>
            <person name="Muensterkoetter M."/>
            <person name="Nelson D."/>
            <person name="O'Donnell K."/>
            <person name="Ouellet T."/>
            <person name="Qi W."/>
            <person name="Quesneville H."/>
            <person name="Roncero M.I.G."/>
            <person name="Seong K.-Y."/>
            <person name="Tetko I.V."/>
            <person name="Urban M."/>
            <person name="Waalwijk C."/>
            <person name="Ward T.J."/>
            <person name="Yao J."/>
            <person name="Birren B.W."/>
            <person name="Kistler H.C."/>
        </authorList>
    </citation>
    <scope>NUCLEOTIDE SEQUENCE [LARGE SCALE GENOMIC DNA]</scope>
    <source>
        <strain>ATCC MYA-4620 / CBS 123657 / FGSC 9075 / NRRL 31084 / PH-1</strain>
    </source>
</reference>
<reference key="2">
    <citation type="journal article" date="2010" name="Nature">
        <title>Comparative genomics reveals mobile pathogenicity chromosomes in Fusarium.</title>
        <authorList>
            <person name="Ma L.-J."/>
            <person name="van der Does H.C."/>
            <person name="Borkovich K.A."/>
            <person name="Coleman J.J."/>
            <person name="Daboussi M.-J."/>
            <person name="Di Pietro A."/>
            <person name="Dufresne M."/>
            <person name="Freitag M."/>
            <person name="Grabherr M."/>
            <person name="Henrissat B."/>
            <person name="Houterman P.M."/>
            <person name="Kang S."/>
            <person name="Shim W.-B."/>
            <person name="Woloshuk C."/>
            <person name="Xie X."/>
            <person name="Xu J.-R."/>
            <person name="Antoniw J."/>
            <person name="Baker S.E."/>
            <person name="Bluhm B.H."/>
            <person name="Breakspear A."/>
            <person name="Brown D.W."/>
            <person name="Butchko R.A.E."/>
            <person name="Chapman S."/>
            <person name="Coulson R."/>
            <person name="Coutinho P.M."/>
            <person name="Danchin E.G.J."/>
            <person name="Diener A."/>
            <person name="Gale L.R."/>
            <person name="Gardiner D.M."/>
            <person name="Goff S."/>
            <person name="Hammond-Kosack K.E."/>
            <person name="Hilburn K."/>
            <person name="Hua-Van A."/>
            <person name="Jonkers W."/>
            <person name="Kazan K."/>
            <person name="Kodira C.D."/>
            <person name="Koehrsen M."/>
            <person name="Kumar L."/>
            <person name="Lee Y.-H."/>
            <person name="Li L."/>
            <person name="Manners J.M."/>
            <person name="Miranda-Saavedra D."/>
            <person name="Mukherjee M."/>
            <person name="Park G."/>
            <person name="Park J."/>
            <person name="Park S.-Y."/>
            <person name="Proctor R.H."/>
            <person name="Regev A."/>
            <person name="Ruiz-Roldan M.C."/>
            <person name="Sain D."/>
            <person name="Sakthikumar S."/>
            <person name="Sykes S."/>
            <person name="Schwartz D.C."/>
            <person name="Turgeon B.G."/>
            <person name="Wapinski I."/>
            <person name="Yoder O."/>
            <person name="Young S."/>
            <person name="Zeng Q."/>
            <person name="Zhou S."/>
            <person name="Galagan J."/>
            <person name="Cuomo C.A."/>
            <person name="Kistler H.C."/>
            <person name="Rep M."/>
        </authorList>
    </citation>
    <scope>GENOME REANNOTATION</scope>
    <source>
        <strain>ATCC MYA-4620 / CBS 123657 / FGSC 9075 / NRRL 31084 / PH-1</strain>
    </source>
</reference>
<reference key="3">
    <citation type="journal article" date="2015" name="BMC Genomics">
        <title>The completed genome sequence of the pathogenic ascomycete fungus Fusarium graminearum.</title>
        <authorList>
            <person name="King R."/>
            <person name="Urban M."/>
            <person name="Hammond-Kosack M.C.U."/>
            <person name="Hassani-Pak K."/>
            <person name="Hammond-Kosack K.E."/>
        </authorList>
    </citation>
    <scope>NUCLEOTIDE SEQUENCE [LARGE SCALE GENOMIC DNA]</scope>
    <source>
        <strain>ATCC MYA-4620 / CBS 123657 / FGSC 9075 / NRRL 31084 / PH-1</strain>
    </source>
</reference>
<reference key="4">
    <citation type="journal article" date="2017" name="Sci. Rep.">
        <title>Genome-wide functional analysis reveals that autophagy is necessary for growth, sporulation, deoxynivalenol production and virulence in Fusarium graminearum.</title>
        <authorList>
            <person name="Lv W."/>
            <person name="Wang C."/>
            <person name="Yang N."/>
            <person name="Que Y."/>
            <person name="Talbot N.J."/>
            <person name="Wang Z."/>
        </authorList>
    </citation>
    <scope>IDENTIFICATION</scope>
    <scope>FUNCTION</scope>
    <scope>DISRUPTION PHENOTYPE</scope>
</reference>
<sequence length="2182" mass="239159">MATFFQSFRSSSMPKRLLRYALSRLELLDADALEMDNLDLAIGRNTVFEFRDVGIKLKKLNKLLQLPDTFKLKKAKVLLLRVTIPMDFYTSPIIVEVDGVDIALQVIGNESKPSRSPGTRTPDESVAVPNTVDLAQSFLETQPKSERRKLEDALAAESQDLGASVSMSDDGSEDDLAYGTGQALSLPAFLADFLQGIVDRMQVRIKGVNFQLDVEVLVEPSSTTNEMVSFQVALEGIDVEGVTTRSYDDAGFPTIVHKEGKRHVSLSNVRAYLISEANVFSALAKSPSIASPSLASSPAMTRNPPSRQATELSLASLRDEPVSSSQASIRSNEPESASHHSLPENDHILSSQHSIDQRLESSLRQSLQRKDPLADSHESLQDDYFMDQEPVEQDYPLGDSEDALGIPYEFSNPQDDDAEDSPATPRASMYHDFNNAANDETLFHSILLPGEHGSQSTVLENERSMWSTPEREARSAPNLETPVAQFNMEASSSSIQNEQLRRTFSSESFGVASTEELAQSHMYTHEDAENEPAPEVEQTTEPEKPDSPVLDTSVHELARPQTPEPELSIAEAPVPETSSPKALSLRAPSPVTEDAPSPVREHRKPEGFIPGAWDDDYDDPEEEPVASTTLRRSAYRSKILSDPADASDSESSEPAFSRACLTDIDPENPRASTKQQEDVATPKGPTRLVKEILNLKTISIYIPSQHQHIQVQPASSESVAELSQSLGQSAYPQAPGAFSVHGATHAQQRSSQGTSSVENSLEVDLSPINLRFDASLGFLLAMVVGKLLEAVKDKKPSPAEGSKQDTASKDAPSKETPNVKVTFEEIKLDFVNRLGGISDTPERYLDPSAFIFDQEVLLNATLQNLAISITQTEISTTPVTKGRLTTQPAVLTRIDLQKFRFGYANGDIISFDSGKPMSTSVRDTFLSDGTDIGIKILQSGGNTKTEVQTLPLVFQLDLRRLDETFSWFGGLSSFLNMSASIASSPAPTPKPAAVVQKPRGVRFDTPVDPDDKSAASENKINLRIGGSWVELIGKDCSMIAETSAIKLISRDEVIGMACSMMRVSGPHLKNSAAEPPINTEIGGVRVEFLTTPKDTDLEKLLELIMPSKHQFDGENDEIMVDTLLRQRRKGSVLRVTVDTVSVRVQNMPLLSVLPNLGEEVAKLSTVAKYLPEDDRPGLLTLGKIRKVGLSLDFGGKLGHLGTDIQDLHVGHISIPSLVAIALHDISVQRNRSEELVSTSPYGARDISLRSPVLMARMIGDEIEPVIKLKMQDLCIEYRVPTIMDLLELGEDATPQDFEASLAASVANLGDQAHHVLTGAPGSPGGKAKSGKPMTLDIGFRDCLLGLNPLGQPSKMVIALTDAHLVALLPQDVETNAVFTINKSSILLINDVAEVKMNELPATQRSRASSSTSRQVSDMCARGYVDICYISSAKVTVDVKELEDGEKQLVVELKDDLLVLETCADSMQTLVSLANALKPPTPPSKENKYLTDVVPMQDLLASISAEAFGRPEGEYDFDQDFAGAQEMAGSGSEADYNTDSPLQVQSRYYDEPVAEELFDATSSSIISRGSQRSGPMMQDTNEGVLLTGFEPTSQQSIDSDDLVIHDDYYDQGASKDSKAKVWNSMKNSYDLAPSDLVKRSILRVKVRDVHVIWNLFDGYDWVHTRDVITKAVQDVEAKAYERQARAGQVHVYEEELEDEEAIGDFLFNSIYIGIPANRDPQELSRAINEGFNDGATETESVATTAFTSATNRTARARPRSKRLKLKRSKHHKITFELQGVDADLFVFPPNSGETLNSIDVRIKTLDVFDHVPTSTWKKFATYDQDMGEREMGTSMVHLEMLNVKPQPSLEASEIVLRATILPLRLHVDQDALDFITRFFEFKDDQVPVHTSKSDVPFLQRAEINNISVKLDFKPKRVDYAGLRSGHTTEFMNFIVLEEARMVLRHVIIYGISGFEKLGKTLNDIWTPDVKANQLPGILAGLAPVRSLVNVGSGFRDLVEVPIREYKKDGRVIRSISKGATAFARTTGTELVKLGAKLAVGTQYALQGAEGMLSGPQQVYEGWDDDDVDPDEQRQISLYADQPTGVISGIRGGYRSLARDVNLVRDAIIAVPGEVMESSTASGAARAVLKRAPTIIFRPAVGVTRAIGQTLMGATNSIDPNNRRRIEEVCYLFAILRRILLTAA</sequence>
<keyword id="KW-0072">Autophagy</keyword>
<keyword id="KW-0256">Endoplasmic reticulum</keyword>
<keyword id="KW-0445">Lipid transport</keyword>
<keyword id="KW-0472">Membrane</keyword>
<keyword id="KW-0653">Protein transport</keyword>
<keyword id="KW-1185">Reference proteome</keyword>
<keyword id="KW-0813">Transport</keyword>
<proteinExistence type="inferred from homology"/>
<evidence type="ECO:0000250" key="1">
    <source>
        <dbReference type="UniProtKB" id="O94649"/>
    </source>
</evidence>
<evidence type="ECO:0000250" key="2">
    <source>
        <dbReference type="UniProtKB" id="P53855"/>
    </source>
</evidence>
<evidence type="ECO:0000256" key="3">
    <source>
        <dbReference type="SAM" id="MobiDB-lite"/>
    </source>
</evidence>
<evidence type="ECO:0000269" key="4">
    <source>
    </source>
</evidence>
<evidence type="ECO:0000303" key="5">
    <source>
    </source>
</evidence>
<evidence type="ECO:0000305" key="6"/>
<organism>
    <name type="scientific">Gibberella zeae (strain ATCC MYA-4620 / CBS 123657 / FGSC 9075 / NRRL 31084 / PH-1)</name>
    <name type="common">Wheat head blight fungus</name>
    <name type="synonym">Fusarium graminearum</name>
    <dbReference type="NCBI Taxonomy" id="229533"/>
    <lineage>
        <taxon>Eukaryota</taxon>
        <taxon>Fungi</taxon>
        <taxon>Dikarya</taxon>
        <taxon>Ascomycota</taxon>
        <taxon>Pezizomycotina</taxon>
        <taxon>Sordariomycetes</taxon>
        <taxon>Hypocreomycetidae</taxon>
        <taxon>Hypocreales</taxon>
        <taxon>Nectriaceae</taxon>
        <taxon>Fusarium</taxon>
    </lineage>
</organism>
<name>ATG2_GIBZE</name>
<dbReference type="EMBL" id="HG970332">
    <property type="protein sequence ID" value="SCB64594.1"/>
    <property type="status" value="ALT_SEQ"/>
    <property type="molecule type" value="Genomic_DNA"/>
</dbReference>
<dbReference type="RefSeq" id="XP_011319240.1">
    <property type="nucleotide sequence ID" value="XM_011320938.1"/>
</dbReference>
<dbReference type="FunCoup" id="I1S0P7">
    <property type="interactions" value="43"/>
</dbReference>
<dbReference type="STRING" id="229533.I1S0P7"/>
<dbReference type="KEGG" id="fgr:FGSG_10283"/>
<dbReference type="eggNOG" id="KOG2993">
    <property type="taxonomic scope" value="Eukaryota"/>
</dbReference>
<dbReference type="HOGENOM" id="CLU_000626_1_0_1"/>
<dbReference type="InParanoid" id="I1S0P7"/>
<dbReference type="OrthoDB" id="92853at110618"/>
<dbReference type="Proteomes" id="UP000070720">
    <property type="component" value="Chromosome 1"/>
</dbReference>
<dbReference type="GO" id="GO:0005789">
    <property type="term" value="C:endoplasmic reticulum membrane"/>
    <property type="evidence" value="ECO:0007669"/>
    <property type="project" value="UniProtKB-SubCell"/>
</dbReference>
<dbReference type="GO" id="GO:0061908">
    <property type="term" value="C:phagophore"/>
    <property type="evidence" value="ECO:0007669"/>
    <property type="project" value="TreeGrafter"/>
</dbReference>
<dbReference type="GO" id="GO:0034045">
    <property type="term" value="C:phagophore assembly site membrane"/>
    <property type="evidence" value="ECO:0007669"/>
    <property type="project" value="UniProtKB-SubCell"/>
</dbReference>
<dbReference type="GO" id="GO:0032266">
    <property type="term" value="F:phosphatidylinositol-3-phosphate binding"/>
    <property type="evidence" value="ECO:0007669"/>
    <property type="project" value="TreeGrafter"/>
</dbReference>
<dbReference type="GO" id="GO:0043495">
    <property type="term" value="F:protein-membrane adaptor activity"/>
    <property type="evidence" value="ECO:0007669"/>
    <property type="project" value="TreeGrafter"/>
</dbReference>
<dbReference type="GO" id="GO:0000045">
    <property type="term" value="P:autophagosome assembly"/>
    <property type="evidence" value="ECO:0007669"/>
    <property type="project" value="TreeGrafter"/>
</dbReference>
<dbReference type="GO" id="GO:0000422">
    <property type="term" value="P:autophagy of mitochondrion"/>
    <property type="evidence" value="ECO:0007669"/>
    <property type="project" value="TreeGrafter"/>
</dbReference>
<dbReference type="GO" id="GO:0061723">
    <property type="term" value="P:glycophagy"/>
    <property type="evidence" value="ECO:0007669"/>
    <property type="project" value="TreeGrafter"/>
</dbReference>
<dbReference type="GO" id="GO:0006869">
    <property type="term" value="P:lipid transport"/>
    <property type="evidence" value="ECO:0007669"/>
    <property type="project" value="UniProtKB-KW"/>
</dbReference>
<dbReference type="GO" id="GO:0034727">
    <property type="term" value="P:piecemeal microautophagy of the nucleus"/>
    <property type="evidence" value="ECO:0007669"/>
    <property type="project" value="TreeGrafter"/>
</dbReference>
<dbReference type="GO" id="GO:0015031">
    <property type="term" value="P:protein transport"/>
    <property type="evidence" value="ECO:0007669"/>
    <property type="project" value="UniProtKB-KW"/>
</dbReference>
<dbReference type="GO" id="GO:0061709">
    <property type="term" value="P:reticulophagy"/>
    <property type="evidence" value="ECO:0007669"/>
    <property type="project" value="TreeGrafter"/>
</dbReference>
<dbReference type="InterPro" id="IPR026849">
    <property type="entry name" value="ATG2"/>
</dbReference>
<dbReference type="PANTHER" id="PTHR13190">
    <property type="entry name" value="AUTOPHAGY-RELATED 2, ISOFORM A"/>
    <property type="match status" value="1"/>
</dbReference>
<dbReference type="PANTHER" id="PTHR13190:SF1">
    <property type="entry name" value="AUTOPHAGY-RELATED 2, ISOFORM A"/>
    <property type="match status" value="1"/>
</dbReference>
<dbReference type="Pfam" id="PF13329">
    <property type="entry name" value="ATG2_CAD"/>
    <property type="match status" value="1"/>
</dbReference>
<feature type="chain" id="PRO_0000443866" description="Autophagy-related protein 2">
    <location>
        <begin position="1"/>
        <end position="2182"/>
    </location>
</feature>
<feature type="region of interest" description="Disordered" evidence="3">
    <location>
        <begin position="291"/>
        <end position="375"/>
    </location>
</feature>
<feature type="region of interest" description="Disordered" evidence="3">
    <location>
        <begin position="392"/>
        <end position="426"/>
    </location>
</feature>
<feature type="region of interest" description="Disordered" evidence="3">
    <location>
        <begin position="523"/>
        <end position="630"/>
    </location>
</feature>
<feature type="region of interest" description="Disordered" evidence="3">
    <location>
        <begin position="663"/>
        <end position="682"/>
    </location>
</feature>
<feature type="region of interest" description="Disordered" evidence="3">
    <location>
        <begin position="736"/>
        <end position="758"/>
    </location>
</feature>
<feature type="region of interest" description="Disordered" evidence="3">
    <location>
        <begin position="793"/>
        <end position="816"/>
    </location>
</feature>
<feature type="compositionally biased region" description="Polar residues" evidence="3">
    <location>
        <begin position="303"/>
        <end position="313"/>
    </location>
</feature>
<feature type="compositionally biased region" description="Polar residues" evidence="3">
    <location>
        <begin position="322"/>
        <end position="331"/>
    </location>
</feature>
<feature type="compositionally biased region" description="Basic and acidic residues" evidence="3">
    <location>
        <begin position="332"/>
        <end position="347"/>
    </location>
</feature>
<feature type="compositionally biased region" description="Acidic residues" evidence="3">
    <location>
        <begin position="528"/>
        <end position="540"/>
    </location>
</feature>
<feature type="compositionally biased region" description="Acidic residues" evidence="3">
    <location>
        <begin position="613"/>
        <end position="624"/>
    </location>
</feature>
<feature type="compositionally biased region" description="Polar residues" evidence="3">
    <location>
        <begin position="745"/>
        <end position="758"/>
    </location>
</feature>
<feature type="compositionally biased region" description="Basic and acidic residues" evidence="3">
    <location>
        <begin position="793"/>
        <end position="813"/>
    </location>
</feature>
<protein>
    <recommendedName>
        <fullName evidence="5">Autophagy-related protein 2</fullName>
    </recommendedName>
</protein>
<gene>
    <name evidence="5" type="primary">ATG2</name>
    <name type="ORF">FGRAMPH1_01T07725</name>
</gene>
<accession>I1S0P7</accession>
<accession>A0A098DCH7</accession>
<accession>A0A1C3YJ58</accession>